<proteinExistence type="evidence at transcript level"/>
<organism>
    <name type="scientific">Mus musculus</name>
    <name type="common">Mouse</name>
    <dbReference type="NCBI Taxonomy" id="10090"/>
    <lineage>
        <taxon>Eukaryota</taxon>
        <taxon>Metazoa</taxon>
        <taxon>Chordata</taxon>
        <taxon>Craniata</taxon>
        <taxon>Vertebrata</taxon>
        <taxon>Euteleostomi</taxon>
        <taxon>Mammalia</taxon>
        <taxon>Eutheria</taxon>
        <taxon>Euarchontoglires</taxon>
        <taxon>Glires</taxon>
        <taxon>Rodentia</taxon>
        <taxon>Myomorpha</taxon>
        <taxon>Muroidea</taxon>
        <taxon>Muridae</taxon>
        <taxon>Murinae</taxon>
        <taxon>Mus</taxon>
        <taxon>Mus</taxon>
    </lineage>
</organism>
<gene>
    <name type="primary">Khdc1a</name>
    <name type="synonym">Ndg1</name>
</gene>
<accession>Q3UWR2</accession>
<accession>Q7TNM0</accession>
<protein>
    <recommendedName>
        <fullName>KH homology domain-containing protein 1A</fullName>
    </recommendedName>
    <alternativeName>
        <fullName>Nur77 downstream gene 1 protein</fullName>
    </alternativeName>
</protein>
<evidence type="ECO:0000269" key="1">
    <source>
    </source>
</evidence>
<evidence type="ECO:0000305" key="2"/>
<reference key="1">
    <citation type="journal article" date="2003" name="EMBO J.">
        <title>Transcriptional activation of known and novel apoptotic pathways by Nur77 orphan steroid receptor.</title>
        <authorList>
            <person name="Rajpal A."/>
            <person name="Cho Y.A."/>
            <person name="Yelent B."/>
            <person name="Koza-Taylor P.H."/>
            <person name="Li D."/>
            <person name="Chen E."/>
            <person name="Whang M."/>
            <person name="Kang C."/>
            <person name="Turi T.G."/>
            <person name="Winoto A."/>
        </authorList>
    </citation>
    <scope>NUCLEOTIDE SEQUENCE [MRNA]</scope>
    <scope>FUNCTION</scope>
    <scope>SUBCELLULAR LOCATION</scope>
    <scope>INDUCTION</scope>
    <source>
        <strain>C57BL/6J</strain>
    </source>
</reference>
<reference key="2">
    <citation type="journal article" date="2005" name="Science">
        <title>The transcriptional landscape of the mammalian genome.</title>
        <authorList>
            <person name="Carninci P."/>
            <person name="Kasukawa T."/>
            <person name="Katayama S."/>
            <person name="Gough J."/>
            <person name="Frith M.C."/>
            <person name="Maeda N."/>
            <person name="Oyama R."/>
            <person name="Ravasi T."/>
            <person name="Lenhard B."/>
            <person name="Wells C."/>
            <person name="Kodzius R."/>
            <person name="Shimokawa K."/>
            <person name="Bajic V.B."/>
            <person name="Brenner S.E."/>
            <person name="Batalov S."/>
            <person name="Forrest A.R."/>
            <person name="Zavolan M."/>
            <person name="Davis M.J."/>
            <person name="Wilming L.G."/>
            <person name="Aidinis V."/>
            <person name="Allen J.E."/>
            <person name="Ambesi-Impiombato A."/>
            <person name="Apweiler R."/>
            <person name="Aturaliya R.N."/>
            <person name="Bailey T.L."/>
            <person name="Bansal M."/>
            <person name="Baxter L."/>
            <person name="Beisel K.W."/>
            <person name="Bersano T."/>
            <person name="Bono H."/>
            <person name="Chalk A.M."/>
            <person name="Chiu K.P."/>
            <person name="Choudhary V."/>
            <person name="Christoffels A."/>
            <person name="Clutterbuck D.R."/>
            <person name="Crowe M.L."/>
            <person name="Dalla E."/>
            <person name="Dalrymple B.P."/>
            <person name="de Bono B."/>
            <person name="Della Gatta G."/>
            <person name="di Bernardo D."/>
            <person name="Down T."/>
            <person name="Engstrom P."/>
            <person name="Fagiolini M."/>
            <person name="Faulkner G."/>
            <person name="Fletcher C.F."/>
            <person name="Fukushima T."/>
            <person name="Furuno M."/>
            <person name="Futaki S."/>
            <person name="Gariboldi M."/>
            <person name="Georgii-Hemming P."/>
            <person name="Gingeras T.R."/>
            <person name="Gojobori T."/>
            <person name="Green R.E."/>
            <person name="Gustincich S."/>
            <person name="Harbers M."/>
            <person name="Hayashi Y."/>
            <person name="Hensch T.K."/>
            <person name="Hirokawa N."/>
            <person name="Hill D."/>
            <person name="Huminiecki L."/>
            <person name="Iacono M."/>
            <person name="Ikeo K."/>
            <person name="Iwama A."/>
            <person name="Ishikawa T."/>
            <person name="Jakt M."/>
            <person name="Kanapin A."/>
            <person name="Katoh M."/>
            <person name="Kawasawa Y."/>
            <person name="Kelso J."/>
            <person name="Kitamura H."/>
            <person name="Kitano H."/>
            <person name="Kollias G."/>
            <person name="Krishnan S.P."/>
            <person name="Kruger A."/>
            <person name="Kummerfeld S.K."/>
            <person name="Kurochkin I.V."/>
            <person name="Lareau L.F."/>
            <person name="Lazarevic D."/>
            <person name="Lipovich L."/>
            <person name="Liu J."/>
            <person name="Liuni S."/>
            <person name="McWilliam S."/>
            <person name="Madan Babu M."/>
            <person name="Madera M."/>
            <person name="Marchionni L."/>
            <person name="Matsuda H."/>
            <person name="Matsuzawa S."/>
            <person name="Miki H."/>
            <person name="Mignone F."/>
            <person name="Miyake S."/>
            <person name="Morris K."/>
            <person name="Mottagui-Tabar S."/>
            <person name="Mulder N."/>
            <person name="Nakano N."/>
            <person name="Nakauchi H."/>
            <person name="Ng P."/>
            <person name="Nilsson R."/>
            <person name="Nishiguchi S."/>
            <person name="Nishikawa S."/>
            <person name="Nori F."/>
            <person name="Ohara O."/>
            <person name="Okazaki Y."/>
            <person name="Orlando V."/>
            <person name="Pang K.C."/>
            <person name="Pavan W.J."/>
            <person name="Pavesi G."/>
            <person name="Pesole G."/>
            <person name="Petrovsky N."/>
            <person name="Piazza S."/>
            <person name="Reed J."/>
            <person name="Reid J.F."/>
            <person name="Ring B.Z."/>
            <person name="Ringwald M."/>
            <person name="Rost B."/>
            <person name="Ruan Y."/>
            <person name="Salzberg S.L."/>
            <person name="Sandelin A."/>
            <person name="Schneider C."/>
            <person name="Schoenbach C."/>
            <person name="Sekiguchi K."/>
            <person name="Semple C.A."/>
            <person name="Seno S."/>
            <person name="Sessa L."/>
            <person name="Sheng Y."/>
            <person name="Shibata Y."/>
            <person name="Shimada H."/>
            <person name="Shimada K."/>
            <person name="Silva D."/>
            <person name="Sinclair B."/>
            <person name="Sperling S."/>
            <person name="Stupka E."/>
            <person name="Sugiura K."/>
            <person name="Sultana R."/>
            <person name="Takenaka Y."/>
            <person name="Taki K."/>
            <person name="Tammoja K."/>
            <person name="Tan S.L."/>
            <person name="Tang S."/>
            <person name="Taylor M.S."/>
            <person name="Tegner J."/>
            <person name="Teichmann S.A."/>
            <person name="Ueda H.R."/>
            <person name="van Nimwegen E."/>
            <person name="Verardo R."/>
            <person name="Wei C.L."/>
            <person name="Yagi K."/>
            <person name="Yamanishi H."/>
            <person name="Zabarovsky E."/>
            <person name="Zhu S."/>
            <person name="Zimmer A."/>
            <person name="Hide W."/>
            <person name="Bult C."/>
            <person name="Grimmond S.M."/>
            <person name="Teasdale R.D."/>
            <person name="Liu E.T."/>
            <person name="Brusic V."/>
            <person name="Quackenbush J."/>
            <person name="Wahlestedt C."/>
            <person name="Mattick J.S."/>
            <person name="Hume D.A."/>
            <person name="Kai C."/>
            <person name="Sasaki D."/>
            <person name="Tomaru Y."/>
            <person name="Fukuda S."/>
            <person name="Kanamori-Katayama M."/>
            <person name="Suzuki M."/>
            <person name="Aoki J."/>
            <person name="Arakawa T."/>
            <person name="Iida J."/>
            <person name="Imamura K."/>
            <person name="Itoh M."/>
            <person name="Kato T."/>
            <person name="Kawaji H."/>
            <person name="Kawagashira N."/>
            <person name="Kawashima T."/>
            <person name="Kojima M."/>
            <person name="Kondo S."/>
            <person name="Konno H."/>
            <person name="Nakano K."/>
            <person name="Ninomiya N."/>
            <person name="Nishio T."/>
            <person name="Okada M."/>
            <person name="Plessy C."/>
            <person name="Shibata K."/>
            <person name="Shiraki T."/>
            <person name="Suzuki S."/>
            <person name="Tagami M."/>
            <person name="Waki K."/>
            <person name="Watahiki A."/>
            <person name="Okamura-Oho Y."/>
            <person name="Suzuki H."/>
            <person name="Kawai J."/>
            <person name="Hayashizaki Y."/>
        </authorList>
    </citation>
    <scope>NUCLEOTIDE SEQUENCE [LARGE SCALE MRNA]</scope>
</reference>
<keyword id="KW-0053">Apoptosis</keyword>
<keyword id="KW-0963">Cytoplasm</keyword>
<keyword id="KW-1185">Reference proteome</keyword>
<keyword id="KW-0694">RNA-binding</keyword>
<comment type="function">
    <text evidence="1">Has pro-apoptotic activity.</text>
</comment>
<comment type="subcellular location">
    <subcellularLocation>
        <location evidence="1">Cytoplasm</location>
    </subcellularLocation>
</comment>
<comment type="induction">
    <text evidence="1">By NR4A1/NUR77.</text>
</comment>
<comment type="similarity">
    <text evidence="2">Belongs to the KHDC1 family.</text>
</comment>
<dbReference type="EMBL" id="AY238603">
    <property type="protein sequence ID" value="AAP51210.1"/>
    <property type="molecule type" value="mRNA"/>
</dbReference>
<dbReference type="EMBL" id="AK136166">
    <property type="protein sequence ID" value="BAE22852.1"/>
    <property type="molecule type" value="mRNA"/>
</dbReference>
<dbReference type="CCDS" id="CCDS14848.1"/>
<dbReference type="RefSeq" id="NP_899145.2">
    <property type="nucleotide sequence ID" value="NM_183322.2"/>
</dbReference>
<dbReference type="FunCoup" id="Q3UWR2">
    <property type="interactions" value="68"/>
</dbReference>
<dbReference type="STRING" id="10090.ENSMUSP00000085749"/>
<dbReference type="PaxDb" id="10090-ENSMUSP00000085749"/>
<dbReference type="DNASU" id="368204"/>
<dbReference type="Ensembl" id="ENSMUST00000088407.4">
    <property type="protein sequence ID" value="ENSMUSP00000085749.4"/>
    <property type="gene ID" value="ENSMUSG00000067750.4"/>
</dbReference>
<dbReference type="GeneID" id="368204"/>
<dbReference type="KEGG" id="mmu:368204"/>
<dbReference type="UCSC" id="uc007aln.1">
    <property type="organism name" value="mouse"/>
</dbReference>
<dbReference type="AGR" id="MGI:2676610"/>
<dbReference type="CTD" id="368204"/>
<dbReference type="MGI" id="MGI:2676610">
    <property type="gene designation" value="Khdc1a"/>
</dbReference>
<dbReference type="VEuPathDB" id="HostDB:ENSMUSG00000067750"/>
<dbReference type="eggNOG" id="ENOG502TCCK">
    <property type="taxonomic scope" value="Eukaryota"/>
</dbReference>
<dbReference type="GeneTree" id="ENSGT00940000154353"/>
<dbReference type="HOGENOM" id="CLU_102222_0_1_1"/>
<dbReference type="InParanoid" id="Q3UWR2"/>
<dbReference type="OMA" id="DSYCHAR"/>
<dbReference type="OrthoDB" id="9835352at2759"/>
<dbReference type="PhylomeDB" id="Q3UWR2"/>
<dbReference type="TreeFam" id="TF337964"/>
<dbReference type="BioGRID-ORCS" id="368204">
    <property type="hits" value="1 hit in 42 CRISPR screens"/>
</dbReference>
<dbReference type="ChiTaRS" id="Khdc1a">
    <property type="organism name" value="mouse"/>
</dbReference>
<dbReference type="PRO" id="PR:Q3UWR2"/>
<dbReference type="Proteomes" id="UP000000589">
    <property type="component" value="Chromosome 1"/>
</dbReference>
<dbReference type="RNAct" id="Q3UWR2">
    <property type="molecule type" value="protein"/>
</dbReference>
<dbReference type="Bgee" id="ENSMUSG00000067750">
    <property type="expression patterns" value="Expressed in animal zygote and 21 other cell types or tissues"/>
</dbReference>
<dbReference type="GO" id="GO:0005737">
    <property type="term" value="C:cytoplasm"/>
    <property type="evidence" value="ECO:0000314"/>
    <property type="project" value="MGI"/>
</dbReference>
<dbReference type="GO" id="GO:0042802">
    <property type="term" value="F:identical protein binding"/>
    <property type="evidence" value="ECO:0000314"/>
    <property type="project" value="MGI"/>
</dbReference>
<dbReference type="GO" id="GO:0008266">
    <property type="term" value="F:poly(U) RNA binding"/>
    <property type="evidence" value="ECO:0000314"/>
    <property type="project" value="MGI"/>
</dbReference>
<dbReference type="GO" id="GO:0006915">
    <property type="term" value="P:apoptotic process"/>
    <property type="evidence" value="ECO:0007669"/>
    <property type="project" value="UniProtKB-KW"/>
</dbReference>
<dbReference type="CDD" id="cd12795">
    <property type="entry name" value="FILIA_N_like"/>
    <property type="match status" value="1"/>
</dbReference>
<dbReference type="FunFam" id="3.30.1370.10:FF:000157">
    <property type="entry name" value="KH homology domain-containing protein 1C"/>
    <property type="match status" value="1"/>
</dbReference>
<dbReference type="Gene3D" id="3.30.1370.10">
    <property type="entry name" value="K Homology domain, type 1"/>
    <property type="match status" value="1"/>
</dbReference>
<dbReference type="InterPro" id="IPR036612">
    <property type="entry name" value="KH_dom_type_1_sf"/>
</dbReference>
<dbReference type="InterPro" id="IPR031952">
    <property type="entry name" value="MOEP19_KH-like"/>
</dbReference>
<dbReference type="PANTHER" id="PTHR31368">
    <property type="entry name" value="DEVELOPMENT PLURPOTENCY-ASSOCIATED PROTEIN 1/5 FAMILY MEMBER"/>
    <property type="match status" value="1"/>
</dbReference>
<dbReference type="PANTHER" id="PTHR31368:SF6">
    <property type="entry name" value="KH HOMOLOGY DOMAIN-CONTAINING PROTEIN 1"/>
    <property type="match status" value="1"/>
</dbReference>
<dbReference type="Pfam" id="PF16005">
    <property type="entry name" value="MOEP19"/>
    <property type="match status" value="1"/>
</dbReference>
<name>KHD1A_MOUSE</name>
<feature type="chain" id="PRO_0000311433" description="KH homology domain-containing protein 1A">
    <location>
        <begin position="1"/>
        <end position="166"/>
    </location>
</feature>
<feature type="domain" description="KH; atypical">
    <location>
        <begin position="19"/>
        <end position="78"/>
    </location>
</feature>
<feature type="sequence conflict" description="In Ref. 1; AAP51210." evidence="2" ref="1">
    <original>V</original>
    <variation>A</variation>
    <location>
        <position position="21"/>
    </location>
</feature>
<feature type="sequence conflict" description="In Ref. 1; AAP51210." evidence="2" ref="1">
    <original>K</original>
    <variation>R</variation>
    <location>
        <position position="28"/>
    </location>
</feature>
<sequence length="166" mass="19690">MSDLRRKGWWNVPDYFHSPLVFDMEEDKEDYIFGPHDEYLHTLEVHSNTLIQLERWFTPTGQTRVTVVGPLKARLWVMDMIRKVGSKNNLDQIKGKMMLLQIRDHPLRDRDLELHPESGSSLWITTMNDTTFVEVPHFLRFPLTVAWLFCGFVRILGIHNFADLHW</sequence>